<reference key="1">
    <citation type="journal article" date="2008" name="Genome Res.">
        <title>Genome sequence of the beta-rhizobium Cupriavidus taiwanensis and comparative genomics of rhizobia.</title>
        <authorList>
            <person name="Amadou C."/>
            <person name="Pascal G."/>
            <person name="Mangenot S."/>
            <person name="Glew M."/>
            <person name="Bontemps C."/>
            <person name="Capela D."/>
            <person name="Carrere S."/>
            <person name="Cruveiller S."/>
            <person name="Dossat C."/>
            <person name="Lajus A."/>
            <person name="Marchetti M."/>
            <person name="Poinsot V."/>
            <person name="Rouy Z."/>
            <person name="Servin B."/>
            <person name="Saad M."/>
            <person name="Schenowitz C."/>
            <person name="Barbe V."/>
            <person name="Batut J."/>
            <person name="Medigue C."/>
            <person name="Masson-Boivin C."/>
        </authorList>
    </citation>
    <scope>NUCLEOTIDE SEQUENCE [LARGE SCALE GENOMIC DNA]</scope>
    <source>
        <strain>DSM 17343 / BCRC 17206 / CCUG 44338 / CIP 107171 / LMG 19424 / R1</strain>
    </source>
</reference>
<evidence type="ECO:0000255" key="1">
    <source>
        <dbReference type="HAMAP-Rule" id="MF_00072"/>
    </source>
</evidence>
<gene>
    <name evidence="1" type="primary">prfC</name>
    <name type="ordered locus">RALTA_B2302</name>
</gene>
<sequence>MSSLVSEIARRRTFAIISHPDAGKTTLTEKLLWFGGAIQVAGEVRARKADRHATSDWMELEKQRGISVTSSVMQFPYSRESADGKAQENIVNLLDTPGHEDFSEDTYRTLTAVDSAVMVIDSVNGVEAQTIKLLNVCRLRDTPILTFINKLDREGRSPIELLDEIEDVLQIQCAPMTWPIGMGKAFRGVYHLIDDKVQLFDPHGDKGTAAILDGLDNPELDRILGSQAEELRIEIELVRGASHTFDKAAFLNGKQTPVYFGSAINNFGVQSLLDALCELSPPPLARNTESRVVEPQEPKFTGFVFKIQANMDPRHRDRIAFVRVCSGRFERGMKLLHVSAGKTVAINNAITFMAQDRNTTEEAYAGDIIGVPNHGTIRLGDVFTEGEPLKFTGIPSFAPEFFRRARLNNPLKVKQLQKGLQQLAEEGATQMFRPLASNDLVLGAVGILQFDVVAHRLEHEYGVDAIFESHECATARWLKGTPAEIEKLIAKAGHNVALDGAGDHVYLAPSMVNLRLTQERFPELQFLETREIV</sequence>
<organism>
    <name type="scientific">Cupriavidus taiwanensis (strain DSM 17343 / BCRC 17206 / CCUG 44338 / CIP 107171 / LMG 19424 / R1)</name>
    <name type="common">Ralstonia taiwanensis (strain LMG 19424)</name>
    <dbReference type="NCBI Taxonomy" id="977880"/>
    <lineage>
        <taxon>Bacteria</taxon>
        <taxon>Pseudomonadati</taxon>
        <taxon>Pseudomonadota</taxon>
        <taxon>Betaproteobacteria</taxon>
        <taxon>Burkholderiales</taxon>
        <taxon>Burkholderiaceae</taxon>
        <taxon>Cupriavidus</taxon>
    </lineage>
</organism>
<accession>B3RDA4</accession>
<comment type="function">
    <text evidence="1">Increases the formation of ribosomal termination complexes and stimulates activities of RF-1 and RF-2. It binds guanine nucleotides and has strong preference for UGA stop codons. It may interact directly with the ribosome. The stimulation of RF-1 and RF-2 is significantly reduced by GTP and GDP, but not by GMP.</text>
</comment>
<comment type="subcellular location">
    <subcellularLocation>
        <location evidence="1">Cytoplasm</location>
    </subcellularLocation>
</comment>
<comment type="similarity">
    <text evidence="1">Belongs to the TRAFAC class translation factor GTPase superfamily. Classic translation factor GTPase family. PrfC subfamily.</text>
</comment>
<dbReference type="EMBL" id="CU633750">
    <property type="protein sequence ID" value="CAQ72879.1"/>
    <property type="molecule type" value="Genomic_DNA"/>
</dbReference>
<dbReference type="RefSeq" id="WP_012357091.1">
    <property type="nucleotide sequence ID" value="NC_010530.1"/>
</dbReference>
<dbReference type="SMR" id="B3RDA4"/>
<dbReference type="GeneID" id="29765601"/>
<dbReference type="KEGG" id="cti:RALTA_B2302"/>
<dbReference type="eggNOG" id="COG4108">
    <property type="taxonomic scope" value="Bacteria"/>
</dbReference>
<dbReference type="HOGENOM" id="CLU_002794_2_1_4"/>
<dbReference type="BioCyc" id="CTAI977880:RALTA_RS26660-MONOMER"/>
<dbReference type="Proteomes" id="UP000001692">
    <property type="component" value="Chromosome 2"/>
</dbReference>
<dbReference type="GO" id="GO:0005829">
    <property type="term" value="C:cytosol"/>
    <property type="evidence" value="ECO:0007669"/>
    <property type="project" value="TreeGrafter"/>
</dbReference>
<dbReference type="GO" id="GO:0005525">
    <property type="term" value="F:GTP binding"/>
    <property type="evidence" value="ECO:0007669"/>
    <property type="project" value="UniProtKB-UniRule"/>
</dbReference>
<dbReference type="GO" id="GO:0003924">
    <property type="term" value="F:GTPase activity"/>
    <property type="evidence" value="ECO:0007669"/>
    <property type="project" value="InterPro"/>
</dbReference>
<dbReference type="GO" id="GO:0016150">
    <property type="term" value="F:translation release factor activity, codon nonspecific"/>
    <property type="evidence" value="ECO:0007669"/>
    <property type="project" value="TreeGrafter"/>
</dbReference>
<dbReference type="GO" id="GO:0016149">
    <property type="term" value="F:translation release factor activity, codon specific"/>
    <property type="evidence" value="ECO:0007669"/>
    <property type="project" value="UniProtKB-UniRule"/>
</dbReference>
<dbReference type="GO" id="GO:0006449">
    <property type="term" value="P:regulation of translational termination"/>
    <property type="evidence" value="ECO:0007669"/>
    <property type="project" value="UniProtKB-UniRule"/>
</dbReference>
<dbReference type="CDD" id="cd04169">
    <property type="entry name" value="RF3"/>
    <property type="match status" value="1"/>
</dbReference>
<dbReference type="CDD" id="cd03689">
    <property type="entry name" value="RF3_II"/>
    <property type="match status" value="1"/>
</dbReference>
<dbReference type="CDD" id="cd16259">
    <property type="entry name" value="RF3_III"/>
    <property type="match status" value="1"/>
</dbReference>
<dbReference type="FunFam" id="2.40.30.10:FF:000040">
    <property type="entry name" value="Peptide chain release factor 3"/>
    <property type="match status" value="1"/>
</dbReference>
<dbReference type="FunFam" id="3.30.70.3280:FF:000001">
    <property type="entry name" value="Peptide chain release factor 3"/>
    <property type="match status" value="1"/>
</dbReference>
<dbReference type="FunFam" id="3.40.50.300:FF:000542">
    <property type="entry name" value="Peptide chain release factor 3"/>
    <property type="match status" value="1"/>
</dbReference>
<dbReference type="Gene3D" id="3.40.50.300">
    <property type="entry name" value="P-loop containing nucleotide triphosphate hydrolases"/>
    <property type="match status" value="3"/>
</dbReference>
<dbReference type="Gene3D" id="3.30.70.3280">
    <property type="entry name" value="Peptide chain release factor 3, domain III"/>
    <property type="match status" value="1"/>
</dbReference>
<dbReference type="HAMAP" id="MF_00072">
    <property type="entry name" value="Rel_fac_3"/>
    <property type="match status" value="1"/>
</dbReference>
<dbReference type="InterPro" id="IPR053905">
    <property type="entry name" value="EF-G-like_DII"/>
</dbReference>
<dbReference type="InterPro" id="IPR035647">
    <property type="entry name" value="EFG_III/V"/>
</dbReference>
<dbReference type="InterPro" id="IPR031157">
    <property type="entry name" value="G_TR_CS"/>
</dbReference>
<dbReference type="InterPro" id="IPR027417">
    <property type="entry name" value="P-loop_NTPase"/>
</dbReference>
<dbReference type="InterPro" id="IPR004548">
    <property type="entry name" value="PrfC"/>
</dbReference>
<dbReference type="InterPro" id="IPR032090">
    <property type="entry name" value="RF3_C"/>
</dbReference>
<dbReference type="InterPro" id="IPR038467">
    <property type="entry name" value="RF3_dom_3_sf"/>
</dbReference>
<dbReference type="InterPro" id="IPR041732">
    <property type="entry name" value="RF3_GTP-bd"/>
</dbReference>
<dbReference type="InterPro" id="IPR005225">
    <property type="entry name" value="Small_GTP-bd"/>
</dbReference>
<dbReference type="InterPro" id="IPR000795">
    <property type="entry name" value="T_Tr_GTP-bd_dom"/>
</dbReference>
<dbReference type="InterPro" id="IPR009000">
    <property type="entry name" value="Transl_B-barrel_sf"/>
</dbReference>
<dbReference type="NCBIfam" id="TIGR00503">
    <property type="entry name" value="prfC"/>
    <property type="match status" value="1"/>
</dbReference>
<dbReference type="NCBIfam" id="NF001964">
    <property type="entry name" value="PRK00741.1"/>
    <property type="match status" value="1"/>
</dbReference>
<dbReference type="NCBIfam" id="TIGR00231">
    <property type="entry name" value="small_GTP"/>
    <property type="match status" value="1"/>
</dbReference>
<dbReference type="PANTHER" id="PTHR43556">
    <property type="entry name" value="PEPTIDE CHAIN RELEASE FACTOR RF3"/>
    <property type="match status" value="1"/>
</dbReference>
<dbReference type="PANTHER" id="PTHR43556:SF2">
    <property type="entry name" value="PEPTIDE CHAIN RELEASE FACTOR RF3"/>
    <property type="match status" value="1"/>
</dbReference>
<dbReference type="Pfam" id="PF22042">
    <property type="entry name" value="EF-G_D2"/>
    <property type="match status" value="1"/>
</dbReference>
<dbReference type="Pfam" id="PF00009">
    <property type="entry name" value="GTP_EFTU"/>
    <property type="match status" value="1"/>
</dbReference>
<dbReference type="Pfam" id="PF16658">
    <property type="entry name" value="RF3_C"/>
    <property type="match status" value="1"/>
</dbReference>
<dbReference type="PRINTS" id="PR00315">
    <property type="entry name" value="ELONGATNFCT"/>
</dbReference>
<dbReference type="SUPFAM" id="SSF54980">
    <property type="entry name" value="EF-G C-terminal domain-like"/>
    <property type="match status" value="1"/>
</dbReference>
<dbReference type="SUPFAM" id="SSF52540">
    <property type="entry name" value="P-loop containing nucleoside triphosphate hydrolases"/>
    <property type="match status" value="1"/>
</dbReference>
<dbReference type="SUPFAM" id="SSF50447">
    <property type="entry name" value="Translation proteins"/>
    <property type="match status" value="1"/>
</dbReference>
<dbReference type="PROSITE" id="PS00301">
    <property type="entry name" value="G_TR_1"/>
    <property type="match status" value="1"/>
</dbReference>
<dbReference type="PROSITE" id="PS51722">
    <property type="entry name" value="G_TR_2"/>
    <property type="match status" value="1"/>
</dbReference>
<feature type="chain" id="PRO_1000092479" description="Peptide chain release factor 3">
    <location>
        <begin position="1"/>
        <end position="533"/>
    </location>
</feature>
<feature type="domain" description="tr-type G">
    <location>
        <begin position="9"/>
        <end position="284"/>
    </location>
</feature>
<feature type="binding site" evidence="1">
    <location>
        <begin position="18"/>
        <end position="25"/>
    </location>
    <ligand>
        <name>GTP</name>
        <dbReference type="ChEBI" id="CHEBI:37565"/>
    </ligand>
</feature>
<feature type="binding site" evidence="1">
    <location>
        <begin position="95"/>
        <end position="99"/>
    </location>
    <ligand>
        <name>GTP</name>
        <dbReference type="ChEBI" id="CHEBI:37565"/>
    </ligand>
</feature>
<feature type="binding site" evidence="1">
    <location>
        <begin position="149"/>
        <end position="152"/>
    </location>
    <ligand>
        <name>GTP</name>
        <dbReference type="ChEBI" id="CHEBI:37565"/>
    </ligand>
</feature>
<protein>
    <recommendedName>
        <fullName evidence="1">Peptide chain release factor 3</fullName>
        <shortName evidence="1">RF-3</shortName>
    </recommendedName>
</protein>
<name>RF3_CUPTR</name>
<proteinExistence type="inferred from homology"/>
<keyword id="KW-0963">Cytoplasm</keyword>
<keyword id="KW-0342">GTP-binding</keyword>
<keyword id="KW-0547">Nucleotide-binding</keyword>
<keyword id="KW-0648">Protein biosynthesis</keyword>